<dbReference type="EC" id="2.3.1.225" evidence="9"/>
<dbReference type="EMBL" id="AK027430">
    <property type="protein sequence ID" value="BAB55104.1"/>
    <property type="molecule type" value="mRNA"/>
</dbReference>
<dbReference type="EMBL" id="AK075332">
    <property type="protein sequence ID" value="BAC11553.1"/>
    <property type="molecule type" value="mRNA"/>
</dbReference>
<dbReference type="EMBL" id="AK315746">
    <property type="protein sequence ID" value="BAG38100.1"/>
    <property type="molecule type" value="mRNA"/>
</dbReference>
<dbReference type="EMBL" id="AL441992">
    <property type="status" value="NOT_ANNOTATED_CDS"/>
    <property type="molecule type" value="Genomic_DNA"/>
</dbReference>
<dbReference type="EMBL" id="CH471090">
    <property type="protein sequence ID" value="EAW87826.1"/>
    <property type="molecule type" value="Genomic_DNA"/>
</dbReference>
<dbReference type="EMBL" id="BC009280">
    <property type="protein sequence ID" value="AAH09280.1"/>
    <property type="molecule type" value="mRNA"/>
</dbReference>
<dbReference type="EMBL" id="BC048251">
    <property type="protein sequence ID" value="AAH48251.1"/>
    <property type="molecule type" value="mRNA"/>
</dbReference>
<dbReference type="CCDS" id="CCDS6909.1">
    <molecule id="Q96GR4-1"/>
</dbReference>
<dbReference type="RefSeq" id="NP_001304944.2">
    <molecule id="Q96GR4-3"/>
    <property type="nucleotide sequence ID" value="NM_001318015.2"/>
</dbReference>
<dbReference type="RefSeq" id="NP_001304945.1">
    <property type="nucleotide sequence ID" value="NM_001318016.1"/>
</dbReference>
<dbReference type="RefSeq" id="NP_001304949.1">
    <property type="nucleotide sequence ID" value="NM_001318020.1"/>
</dbReference>
<dbReference type="RefSeq" id="NP_001304952.1">
    <property type="nucleotide sequence ID" value="NM_001318023.1"/>
</dbReference>
<dbReference type="RefSeq" id="NP_116188.2">
    <molecule id="Q96GR4-1"/>
    <property type="nucleotide sequence ID" value="NM_032799.4"/>
</dbReference>
<dbReference type="SMR" id="Q96GR4"/>
<dbReference type="BioGRID" id="124326">
    <property type="interactions" value="131"/>
</dbReference>
<dbReference type="FunCoup" id="Q96GR4">
    <property type="interactions" value="542"/>
</dbReference>
<dbReference type="IntAct" id="Q96GR4">
    <property type="interactions" value="124"/>
</dbReference>
<dbReference type="MINT" id="Q96GR4"/>
<dbReference type="STRING" id="9606.ENSP00000361748"/>
<dbReference type="iPTMnet" id="Q96GR4"/>
<dbReference type="PhosphoSitePlus" id="Q96GR4"/>
<dbReference type="SwissPalm" id="Q96GR4"/>
<dbReference type="BioMuta" id="ZDHHC12"/>
<dbReference type="DMDM" id="126302619"/>
<dbReference type="jPOST" id="Q96GR4"/>
<dbReference type="MassIVE" id="Q96GR4"/>
<dbReference type="PaxDb" id="9606-ENSP00000361748"/>
<dbReference type="PeptideAtlas" id="Q96GR4"/>
<dbReference type="ProteomicsDB" id="76657">
    <molecule id="Q96GR4-1"/>
</dbReference>
<dbReference type="ProteomicsDB" id="76658">
    <molecule id="Q96GR4-2"/>
</dbReference>
<dbReference type="ProteomicsDB" id="76659">
    <molecule id="Q96GR4-3"/>
</dbReference>
<dbReference type="Pumba" id="Q96GR4"/>
<dbReference type="Antibodypedia" id="67200">
    <property type="antibodies" value="63 antibodies from 14 providers"/>
</dbReference>
<dbReference type="DNASU" id="84885"/>
<dbReference type="Ensembl" id="ENST00000372663.9">
    <molecule id="Q96GR4-1"/>
    <property type="protein sequence ID" value="ENSP00000361748.4"/>
    <property type="gene ID" value="ENSG00000160446.19"/>
</dbReference>
<dbReference type="GeneID" id="84885"/>
<dbReference type="KEGG" id="hsa:84885"/>
<dbReference type="MANE-Select" id="ENST00000372663.9">
    <property type="protein sequence ID" value="ENSP00000361748.4"/>
    <property type="RefSeq nucleotide sequence ID" value="NM_032799.5"/>
    <property type="RefSeq protein sequence ID" value="NP_116188.3"/>
</dbReference>
<dbReference type="UCSC" id="uc004bvy.4">
    <molecule id="Q96GR4-1"/>
    <property type="organism name" value="human"/>
</dbReference>
<dbReference type="AGR" id="HGNC:19159"/>
<dbReference type="CTD" id="84885"/>
<dbReference type="DisGeNET" id="84885"/>
<dbReference type="GeneCards" id="ZDHHC12"/>
<dbReference type="HGNC" id="HGNC:19159">
    <property type="gene designation" value="ZDHHC12"/>
</dbReference>
<dbReference type="HPA" id="ENSG00000160446">
    <property type="expression patterns" value="Low tissue specificity"/>
</dbReference>
<dbReference type="neXtProt" id="NX_Q96GR4"/>
<dbReference type="OpenTargets" id="ENSG00000160446"/>
<dbReference type="PharmGKB" id="PA38802"/>
<dbReference type="VEuPathDB" id="HostDB:ENSG00000160446"/>
<dbReference type="eggNOG" id="KOG1311">
    <property type="taxonomic scope" value="Eukaryota"/>
</dbReference>
<dbReference type="GeneTree" id="ENSGT00940000156902"/>
<dbReference type="HOGENOM" id="CLU_031257_2_0_1"/>
<dbReference type="InParanoid" id="Q96GR4"/>
<dbReference type="OMA" id="FISPHRI"/>
<dbReference type="OrthoDB" id="331948at2759"/>
<dbReference type="PAN-GO" id="Q96GR4">
    <property type="GO annotations" value="5 GO annotations based on evolutionary models"/>
</dbReference>
<dbReference type="PhylomeDB" id="Q96GR4"/>
<dbReference type="TreeFam" id="TF329809"/>
<dbReference type="PathwayCommons" id="Q96GR4"/>
<dbReference type="SignaLink" id="Q96GR4"/>
<dbReference type="BioGRID-ORCS" id="84885">
    <property type="hits" value="14 hits in 1153 CRISPR screens"/>
</dbReference>
<dbReference type="ChiTaRS" id="ZDHHC12">
    <property type="organism name" value="human"/>
</dbReference>
<dbReference type="GenomeRNAi" id="84885"/>
<dbReference type="Pharos" id="Q96GR4">
    <property type="development level" value="Tdark"/>
</dbReference>
<dbReference type="PRO" id="PR:Q96GR4"/>
<dbReference type="Proteomes" id="UP000005640">
    <property type="component" value="Chromosome 9"/>
</dbReference>
<dbReference type="RNAct" id="Q96GR4">
    <property type="molecule type" value="protein"/>
</dbReference>
<dbReference type="Bgee" id="ENSG00000160446">
    <property type="expression patterns" value="Expressed in mucosa of transverse colon and 114 other cell types or tissues"/>
</dbReference>
<dbReference type="ExpressionAtlas" id="Q96GR4">
    <property type="expression patterns" value="baseline and differential"/>
</dbReference>
<dbReference type="GO" id="GO:0043197">
    <property type="term" value="C:dendritic spine"/>
    <property type="evidence" value="ECO:0000314"/>
    <property type="project" value="UniProt"/>
</dbReference>
<dbReference type="GO" id="GO:0005783">
    <property type="term" value="C:endoplasmic reticulum"/>
    <property type="evidence" value="ECO:0000314"/>
    <property type="project" value="UniProtKB"/>
</dbReference>
<dbReference type="GO" id="GO:0005789">
    <property type="term" value="C:endoplasmic reticulum membrane"/>
    <property type="evidence" value="ECO:0007669"/>
    <property type="project" value="UniProtKB-SubCell"/>
</dbReference>
<dbReference type="GO" id="GO:0005794">
    <property type="term" value="C:Golgi apparatus"/>
    <property type="evidence" value="ECO:0000314"/>
    <property type="project" value="UniProtKB"/>
</dbReference>
<dbReference type="GO" id="GO:0000139">
    <property type="term" value="C:Golgi membrane"/>
    <property type="evidence" value="ECO:0000250"/>
    <property type="project" value="UniProt"/>
</dbReference>
<dbReference type="GO" id="GO:0016409">
    <property type="term" value="F:palmitoyltransferase activity"/>
    <property type="evidence" value="ECO:0000314"/>
    <property type="project" value="UniProtKB"/>
</dbReference>
<dbReference type="GO" id="GO:0019706">
    <property type="term" value="F:protein-cysteine S-palmitoyltransferase activity"/>
    <property type="evidence" value="ECO:0000314"/>
    <property type="project" value="UniProtKB"/>
</dbReference>
<dbReference type="GO" id="GO:0097116">
    <property type="term" value="P:gephyrin clustering involved in postsynaptic density assembly"/>
    <property type="evidence" value="ECO:0000314"/>
    <property type="project" value="UniProt"/>
</dbReference>
<dbReference type="GO" id="GO:1900226">
    <property type="term" value="P:negative regulation of NLRP3 inflammasome complex assembly"/>
    <property type="evidence" value="ECO:0000314"/>
    <property type="project" value="UniProtKB"/>
</dbReference>
<dbReference type="GO" id="GO:0018230">
    <property type="term" value="P:peptidyl-L-cysteine S-palmitoylation"/>
    <property type="evidence" value="ECO:0000250"/>
    <property type="project" value="UniProtKB"/>
</dbReference>
<dbReference type="GO" id="GO:0032230">
    <property type="term" value="P:positive regulation of synaptic transmission, GABAergic"/>
    <property type="evidence" value="ECO:0000250"/>
    <property type="project" value="UniProtKB"/>
</dbReference>
<dbReference type="GO" id="GO:0018345">
    <property type="term" value="P:protein palmitoylation"/>
    <property type="evidence" value="ECO:0000314"/>
    <property type="project" value="UniProtKB"/>
</dbReference>
<dbReference type="GO" id="GO:0006612">
    <property type="term" value="P:protein targeting to membrane"/>
    <property type="evidence" value="ECO:0000318"/>
    <property type="project" value="GO_Central"/>
</dbReference>
<dbReference type="InterPro" id="IPR001594">
    <property type="entry name" value="Palmitoyltrfase_DHHC"/>
</dbReference>
<dbReference type="InterPro" id="IPR039859">
    <property type="entry name" value="PFA4/ZDH16/20/ERF2-like"/>
</dbReference>
<dbReference type="PANTHER" id="PTHR22883:SF301">
    <property type="entry name" value="PALMITOYLTRANSFERASE ZDHHC12"/>
    <property type="match status" value="1"/>
</dbReference>
<dbReference type="PANTHER" id="PTHR22883">
    <property type="entry name" value="ZINC FINGER DHHC DOMAIN CONTAINING PROTEIN"/>
    <property type="match status" value="1"/>
</dbReference>
<dbReference type="Pfam" id="PF01529">
    <property type="entry name" value="DHHC"/>
    <property type="match status" value="1"/>
</dbReference>
<dbReference type="PROSITE" id="PS50216">
    <property type="entry name" value="DHHC"/>
    <property type="match status" value="1"/>
</dbReference>
<protein>
    <recommendedName>
        <fullName evidence="17">Palmitoyltransferase ZDHHC12</fullName>
        <ecNumber evidence="9">2.3.1.225</ecNumber>
    </recommendedName>
    <alternativeName>
        <fullName evidence="15">DHHC domain-containing cysteine-rich protein 12</fullName>
        <shortName evidence="15">DHHC-12</shortName>
    </alternativeName>
    <alternativeName>
        <fullName evidence="20">Zinc finger DHHC domain-containing protein 12</fullName>
    </alternativeName>
    <alternativeName>
        <fullName>Zinc finger protein 400</fullName>
    </alternativeName>
</protein>
<name>ZDH12_HUMAN</name>
<feature type="chain" id="PRO_0000212884" description="Palmitoyltransferase ZDHHC12">
    <location>
        <begin position="1"/>
        <end position="267"/>
    </location>
</feature>
<feature type="topological domain" description="Cytoplasmic" evidence="17">
    <location>
        <begin position="1"/>
        <end position="9"/>
    </location>
</feature>
<feature type="transmembrane region" description="Helical" evidence="3">
    <location>
        <begin position="10"/>
        <end position="30"/>
    </location>
</feature>
<feature type="topological domain" description="Lumenal" evidence="17">
    <location>
        <begin position="31"/>
        <end position="43"/>
    </location>
</feature>
<feature type="transmembrane region" description="Helical" evidence="3">
    <location>
        <begin position="44"/>
        <end position="64"/>
    </location>
</feature>
<feature type="topological domain" description="Cytoplasmic" evidence="17">
    <location>
        <begin position="65"/>
        <end position="140"/>
    </location>
</feature>
<feature type="transmembrane region" description="Helical" evidence="3">
    <location>
        <begin position="141"/>
        <end position="161"/>
    </location>
</feature>
<feature type="topological domain" description="Lumenal" evidence="17">
    <location>
        <begin position="162"/>
        <end position="178"/>
    </location>
</feature>
<feature type="transmembrane region" description="Helical" evidence="3">
    <location>
        <begin position="179"/>
        <end position="199"/>
    </location>
</feature>
<feature type="topological domain" description="Cytoplasmic" evidence="17">
    <location>
        <begin position="200"/>
        <end position="267"/>
    </location>
</feature>
<feature type="domain" description="DHHC" evidence="4">
    <location>
        <begin position="97"/>
        <end position="147"/>
    </location>
</feature>
<feature type="active site" description="S-palmitoyl cysteine intermediate" evidence="18">
    <location>
        <position position="127"/>
    </location>
</feature>
<feature type="splice variant" id="VSP_016271" description="In isoform 3." evidence="13">
    <original>T</original>
    <variation>TDKSADELLATHSHSWNQHLQAFAQPGTHFPTSNCTPTPPTPVLPGPASLCSPASP</variation>
    <location>
        <position position="33"/>
    </location>
</feature>
<feature type="splice variant" id="VSP_006945" description="In isoform 2." evidence="12 14">
    <location>
        <begin position="189"/>
        <end position="240"/>
    </location>
</feature>
<feature type="sequence variant" id="VAR_023833" description="In dbSNP:rs2298039.">
    <original>P</original>
    <variation>S</variation>
    <location>
        <position position="69"/>
    </location>
</feature>
<feature type="sequence variant" id="VAR_023834" description="In dbSNP:rs2900268." evidence="5 6 7 11">
    <original>Q</original>
    <variation>L</variation>
    <location>
        <position position="172"/>
    </location>
</feature>
<feature type="mutagenesis site" description="Loss of protein-cysteine S-palmitoyltransferase activity." evidence="9">
    <original>C</original>
    <variation>S</variation>
    <location>
        <position position="127"/>
    </location>
</feature>
<proteinExistence type="evidence at protein level"/>
<reference key="1">
    <citation type="journal article" date="2004" name="Nat. Genet.">
        <title>Complete sequencing and characterization of 21,243 full-length human cDNAs.</title>
        <authorList>
            <person name="Ota T."/>
            <person name="Suzuki Y."/>
            <person name="Nishikawa T."/>
            <person name="Otsuki T."/>
            <person name="Sugiyama T."/>
            <person name="Irie R."/>
            <person name="Wakamatsu A."/>
            <person name="Hayashi K."/>
            <person name="Sato H."/>
            <person name="Nagai K."/>
            <person name="Kimura K."/>
            <person name="Makita H."/>
            <person name="Sekine M."/>
            <person name="Obayashi M."/>
            <person name="Nishi T."/>
            <person name="Shibahara T."/>
            <person name="Tanaka T."/>
            <person name="Ishii S."/>
            <person name="Yamamoto J."/>
            <person name="Saito K."/>
            <person name="Kawai Y."/>
            <person name="Isono Y."/>
            <person name="Nakamura Y."/>
            <person name="Nagahari K."/>
            <person name="Murakami K."/>
            <person name="Yasuda T."/>
            <person name="Iwayanagi T."/>
            <person name="Wagatsuma M."/>
            <person name="Shiratori A."/>
            <person name="Sudo H."/>
            <person name="Hosoiri T."/>
            <person name="Kaku Y."/>
            <person name="Kodaira H."/>
            <person name="Kondo H."/>
            <person name="Sugawara M."/>
            <person name="Takahashi M."/>
            <person name="Kanda K."/>
            <person name="Yokoi T."/>
            <person name="Furuya T."/>
            <person name="Kikkawa E."/>
            <person name="Omura Y."/>
            <person name="Abe K."/>
            <person name="Kamihara K."/>
            <person name="Katsuta N."/>
            <person name="Sato K."/>
            <person name="Tanikawa M."/>
            <person name="Yamazaki M."/>
            <person name="Ninomiya K."/>
            <person name="Ishibashi T."/>
            <person name="Yamashita H."/>
            <person name="Murakawa K."/>
            <person name="Fujimori K."/>
            <person name="Tanai H."/>
            <person name="Kimata M."/>
            <person name="Watanabe M."/>
            <person name="Hiraoka S."/>
            <person name="Chiba Y."/>
            <person name="Ishida S."/>
            <person name="Ono Y."/>
            <person name="Takiguchi S."/>
            <person name="Watanabe S."/>
            <person name="Yosida M."/>
            <person name="Hotuta T."/>
            <person name="Kusano J."/>
            <person name="Kanehori K."/>
            <person name="Takahashi-Fujii A."/>
            <person name="Hara H."/>
            <person name="Tanase T.-O."/>
            <person name="Nomura Y."/>
            <person name="Togiya S."/>
            <person name="Komai F."/>
            <person name="Hara R."/>
            <person name="Takeuchi K."/>
            <person name="Arita M."/>
            <person name="Imose N."/>
            <person name="Musashino K."/>
            <person name="Yuuki H."/>
            <person name="Oshima A."/>
            <person name="Sasaki N."/>
            <person name="Aotsuka S."/>
            <person name="Yoshikawa Y."/>
            <person name="Matsunawa H."/>
            <person name="Ichihara T."/>
            <person name="Shiohata N."/>
            <person name="Sano S."/>
            <person name="Moriya S."/>
            <person name="Momiyama H."/>
            <person name="Satoh N."/>
            <person name="Takami S."/>
            <person name="Terashima Y."/>
            <person name="Suzuki O."/>
            <person name="Nakagawa S."/>
            <person name="Senoh A."/>
            <person name="Mizoguchi H."/>
            <person name="Goto Y."/>
            <person name="Shimizu F."/>
            <person name="Wakebe H."/>
            <person name="Hishigaki H."/>
            <person name="Watanabe T."/>
            <person name="Sugiyama A."/>
            <person name="Takemoto M."/>
            <person name="Kawakami B."/>
            <person name="Yamazaki M."/>
            <person name="Watanabe K."/>
            <person name="Kumagai A."/>
            <person name="Itakura S."/>
            <person name="Fukuzumi Y."/>
            <person name="Fujimori Y."/>
            <person name="Komiyama M."/>
            <person name="Tashiro H."/>
            <person name="Tanigami A."/>
            <person name="Fujiwara T."/>
            <person name="Ono T."/>
            <person name="Yamada K."/>
            <person name="Fujii Y."/>
            <person name="Ozaki K."/>
            <person name="Hirao M."/>
            <person name="Ohmori Y."/>
            <person name="Kawabata A."/>
            <person name="Hikiji T."/>
            <person name="Kobatake N."/>
            <person name="Inagaki H."/>
            <person name="Ikema Y."/>
            <person name="Okamoto S."/>
            <person name="Okitani R."/>
            <person name="Kawakami T."/>
            <person name="Noguchi S."/>
            <person name="Itoh T."/>
            <person name="Shigeta K."/>
            <person name="Senba T."/>
            <person name="Matsumura K."/>
            <person name="Nakajima Y."/>
            <person name="Mizuno T."/>
            <person name="Morinaga M."/>
            <person name="Sasaki M."/>
            <person name="Togashi T."/>
            <person name="Oyama M."/>
            <person name="Hata H."/>
            <person name="Watanabe M."/>
            <person name="Komatsu T."/>
            <person name="Mizushima-Sugano J."/>
            <person name="Satoh T."/>
            <person name="Shirai Y."/>
            <person name="Takahashi Y."/>
            <person name="Nakagawa K."/>
            <person name="Okumura K."/>
            <person name="Nagase T."/>
            <person name="Nomura N."/>
            <person name="Kikuchi H."/>
            <person name="Masuho Y."/>
            <person name="Yamashita R."/>
            <person name="Nakai K."/>
            <person name="Yada T."/>
            <person name="Nakamura Y."/>
            <person name="Ohara O."/>
            <person name="Isogai T."/>
            <person name="Sugano S."/>
        </authorList>
    </citation>
    <scope>NUCLEOTIDE SEQUENCE [LARGE SCALE MRNA] (ISOFORMS 1 AND 2)</scope>
    <scope>VARIANT LEU-172</scope>
    <source>
        <tissue>Teratocarcinoma</tissue>
    </source>
</reference>
<reference key="2">
    <citation type="journal article" date="2005" name="DNA Res.">
        <title>Signal sequence and keyword trap in silico for selection of full-length human cDNAs encoding secretion or membrane proteins from oligo-capped cDNA libraries.</title>
        <authorList>
            <person name="Otsuki T."/>
            <person name="Ota T."/>
            <person name="Nishikawa T."/>
            <person name="Hayashi K."/>
            <person name="Suzuki Y."/>
            <person name="Yamamoto J."/>
            <person name="Wakamatsu A."/>
            <person name="Kimura K."/>
            <person name="Sakamoto K."/>
            <person name="Hatano N."/>
            <person name="Kawai Y."/>
            <person name="Ishii S."/>
            <person name="Saito K."/>
            <person name="Kojima S."/>
            <person name="Sugiyama T."/>
            <person name="Ono T."/>
            <person name="Okano K."/>
            <person name="Yoshikawa Y."/>
            <person name="Aotsuka S."/>
            <person name="Sasaki N."/>
            <person name="Hattori A."/>
            <person name="Okumura K."/>
            <person name="Nagai K."/>
            <person name="Sugano S."/>
            <person name="Isogai T."/>
        </authorList>
    </citation>
    <scope>NUCLEOTIDE SEQUENCE [LARGE SCALE MRNA] (ISOFORM 2)</scope>
    <scope>VARIANT LEU-172</scope>
    <source>
        <tissue>Teratocarcinoma</tissue>
    </source>
</reference>
<reference key="3">
    <citation type="journal article" date="2004" name="Nature">
        <title>DNA sequence and analysis of human chromosome 9.</title>
        <authorList>
            <person name="Humphray S.J."/>
            <person name="Oliver K."/>
            <person name="Hunt A.R."/>
            <person name="Plumb R.W."/>
            <person name="Loveland J.E."/>
            <person name="Howe K.L."/>
            <person name="Andrews T.D."/>
            <person name="Searle S."/>
            <person name="Hunt S.E."/>
            <person name="Scott C.E."/>
            <person name="Jones M.C."/>
            <person name="Ainscough R."/>
            <person name="Almeida J.P."/>
            <person name="Ambrose K.D."/>
            <person name="Ashwell R.I.S."/>
            <person name="Babbage A.K."/>
            <person name="Babbage S."/>
            <person name="Bagguley C.L."/>
            <person name="Bailey J."/>
            <person name="Banerjee R."/>
            <person name="Barker D.J."/>
            <person name="Barlow K.F."/>
            <person name="Bates K."/>
            <person name="Beasley H."/>
            <person name="Beasley O."/>
            <person name="Bird C.P."/>
            <person name="Bray-Allen S."/>
            <person name="Brown A.J."/>
            <person name="Brown J.Y."/>
            <person name="Burford D."/>
            <person name="Burrill W."/>
            <person name="Burton J."/>
            <person name="Carder C."/>
            <person name="Carter N.P."/>
            <person name="Chapman J.C."/>
            <person name="Chen Y."/>
            <person name="Clarke G."/>
            <person name="Clark S.Y."/>
            <person name="Clee C.M."/>
            <person name="Clegg S."/>
            <person name="Collier R.E."/>
            <person name="Corby N."/>
            <person name="Crosier M."/>
            <person name="Cummings A.T."/>
            <person name="Davies J."/>
            <person name="Dhami P."/>
            <person name="Dunn M."/>
            <person name="Dutta I."/>
            <person name="Dyer L.W."/>
            <person name="Earthrowl M.E."/>
            <person name="Faulkner L."/>
            <person name="Fleming C.J."/>
            <person name="Frankish A."/>
            <person name="Frankland J.A."/>
            <person name="French L."/>
            <person name="Fricker D.G."/>
            <person name="Garner P."/>
            <person name="Garnett J."/>
            <person name="Ghori J."/>
            <person name="Gilbert J.G.R."/>
            <person name="Glison C."/>
            <person name="Grafham D.V."/>
            <person name="Gribble S."/>
            <person name="Griffiths C."/>
            <person name="Griffiths-Jones S."/>
            <person name="Grocock R."/>
            <person name="Guy J."/>
            <person name="Hall R.E."/>
            <person name="Hammond S."/>
            <person name="Harley J.L."/>
            <person name="Harrison E.S.I."/>
            <person name="Hart E.A."/>
            <person name="Heath P.D."/>
            <person name="Henderson C.D."/>
            <person name="Hopkins B.L."/>
            <person name="Howard P.J."/>
            <person name="Howden P.J."/>
            <person name="Huckle E."/>
            <person name="Johnson C."/>
            <person name="Johnson D."/>
            <person name="Joy A.A."/>
            <person name="Kay M."/>
            <person name="Keenan S."/>
            <person name="Kershaw J.K."/>
            <person name="Kimberley A.M."/>
            <person name="King A."/>
            <person name="Knights A."/>
            <person name="Laird G.K."/>
            <person name="Langford C."/>
            <person name="Lawlor S."/>
            <person name="Leongamornlert D.A."/>
            <person name="Leversha M."/>
            <person name="Lloyd C."/>
            <person name="Lloyd D.M."/>
            <person name="Lovell J."/>
            <person name="Martin S."/>
            <person name="Mashreghi-Mohammadi M."/>
            <person name="Matthews L."/>
            <person name="McLaren S."/>
            <person name="McLay K.E."/>
            <person name="McMurray A."/>
            <person name="Milne S."/>
            <person name="Nickerson T."/>
            <person name="Nisbett J."/>
            <person name="Nordsiek G."/>
            <person name="Pearce A.V."/>
            <person name="Peck A.I."/>
            <person name="Porter K.M."/>
            <person name="Pandian R."/>
            <person name="Pelan S."/>
            <person name="Phillimore B."/>
            <person name="Povey S."/>
            <person name="Ramsey Y."/>
            <person name="Rand V."/>
            <person name="Scharfe M."/>
            <person name="Sehra H.K."/>
            <person name="Shownkeen R."/>
            <person name="Sims S.K."/>
            <person name="Skuce C.D."/>
            <person name="Smith M."/>
            <person name="Steward C.A."/>
            <person name="Swarbreck D."/>
            <person name="Sycamore N."/>
            <person name="Tester J."/>
            <person name="Thorpe A."/>
            <person name="Tracey A."/>
            <person name="Tromans A."/>
            <person name="Thomas D.W."/>
            <person name="Wall M."/>
            <person name="Wallis J.M."/>
            <person name="West A.P."/>
            <person name="Whitehead S.L."/>
            <person name="Willey D.L."/>
            <person name="Williams S.A."/>
            <person name="Wilming L."/>
            <person name="Wray P.W."/>
            <person name="Young L."/>
            <person name="Ashurst J.L."/>
            <person name="Coulson A."/>
            <person name="Blocker H."/>
            <person name="Durbin R.M."/>
            <person name="Sulston J.E."/>
            <person name="Hubbard T."/>
            <person name="Jackson M.J."/>
            <person name="Bentley D.R."/>
            <person name="Beck S."/>
            <person name="Rogers J."/>
            <person name="Dunham I."/>
        </authorList>
    </citation>
    <scope>NUCLEOTIDE SEQUENCE [LARGE SCALE GENOMIC DNA]</scope>
</reference>
<reference key="4">
    <citation type="submission" date="2005-07" db="EMBL/GenBank/DDBJ databases">
        <authorList>
            <person name="Mural R.J."/>
            <person name="Istrail S."/>
            <person name="Sutton G.G."/>
            <person name="Florea L."/>
            <person name="Halpern A.L."/>
            <person name="Mobarry C.M."/>
            <person name="Lippert R."/>
            <person name="Walenz B."/>
            <person name="Shatkay H."/>
            <person name="Dew I."/>
            <person name="Miller J.R."/>
            <person name="Flanigan M.J."/>
            <person name="Edwards N.J."/>
            <person name="Bolanos R."/>
            <person name="Fasulo D."/>
            <person name="Halldorsson B.V."/>
            <person name="Hannenhalli S."/>
            <person name="Turner R."/>
            <person name="Yooseph S."/>
            <person name="Lu F."/>
            <person name="Nusskern D.R."/>
            <person name="Shue B.C."/>
            <person name="Zheng X.H."/>
            <person name="Zhong F."/>
            <person name="Delcher A.L."/>
            <person name="Huson D.H."/>
            <person name="Kravitz S.A."/>
            <person name="Mouchard L."/>
            <person name="Reinert K."/>
            <person name="Remington K.A."/>
            <person name="Clark A.G."/>
            <person name="Waterman M.S."/>
            <person name="Eichler E.E."/>
            <person name="Adams M.D."/>
            <person name="Hunkapiller M.W."/>
            <person name="Myers E.W."/>
            <person name="Venter J.C."/>
        </authorList>
    </citation>
    <scope>NUCLEOTIDE SEQUENCE [LARGE SCALE GENOMIC DNA]</scope>
    <scope>VARIANT LEU-172</scope>
</reference>
<reference key="5">
    <citation type="journal article" date="2004" name="Genome Res.">
        <title>The status, quality, and expansion of the NIH full-length cDNA project: the Mammalian Gene Collection (MGC).</title>
        <authorList>
            <consortium name="The MGC Project Team"/>
        </authorList>
    </citation>
    <scope>NUCLEOTIDE SEQUENCE [LARGE SCALE MRNA] (ISOFORMS 1 AND 3)</scope>
    <scope>VARIANT LEU-172</scope>
    <source>
        <tissue>Mammary gland</tissue>
        <tissue>Uterus</tissue>
    </source>
</reference>
<reference key="6">
    <citation type="journal article" date="2006" name="Biochim. Biophys. Acta">
        <title>Intracellular localization and tissue-specific distribution of human and yeast DHHC cysteine-rich domain-containing proteins.</title>
        <authorList>
            <person name="Ohno Y."/>
            <person name="Kihara A."/>
            <person name="Sano T."/>
            <person name="Igarashi Y."/>
        </authorList>
    </citation>
    <scope>SUBCELLULAR LOCATION</scope>
    <scope>TISSUE SPECIFICITY</scope>
</reference>
<reference key="7">
    <citation type="journal article" date="2022" name="Mol. Cell">
        <title>Palmitoylation prevents sustained inflammation by limiting NLRP3 inflammasome activation through chaperone-mediated autophagy.</title>
        <authorList>
            <person name="Wang L."/>
            <person name="Cai J."/>
            <person name="Zhao X."/>
            <person name="Ma L."/>
            <person name="Zeng P."/>
            <person name="Zhou L."/>
            <person name="Liu Y."/>
            <person name="Yang S."/>
            <person name="Cai Z."/>
            <person name="Zhang S."/>
            <person name="Zhou L."/>
            <person name="Yang J."/>
            <person name="Liu T."/>
            <person name="Jin S."/>
            <person name="Cui J."/>
        </authorList>
    </citation>
    <scope>FUNCTION</scope>
    <scope>CATALYTIC ACTIVITY</scope>
    <scope>ACTIVE SITE</scope>
    <scope>MUTAGENESIS OF CYS-127</scope>
</reference>
<reference key="8">
    <citation type="journal article" date="2025" name="Autophagy">
        <title>ABHD8 antagonizes inflammation by facilitating chaperone-mediated autophagy-mediated degradation of NLRP3.</title>
        <authorList>
            <person name="Yang S."/>
            <person name="Li M."/>
            <person name="Lian G."/>
            <person name="Wu Y."/>
            <person name="Cui J."/>
            <person name="Wang L."/>
        </authorList>
    </citation>
    <scope>FUNCTION</scope>
</reference>
<gene>
    <name evidence="16 20" type="primary">ZDHHC12</name>
    <name type="synonym">ZNF400</name>
    <name evidence="19" type="ORF">PSEC0008</name>
</gene>
<sequence length="267" mass="30813">MAPWALLSPGVLVRTGHTVLTWGITLVLFLHDTELRQWEEQGELLLPLTFLLLVLGSLLLYLAVSLMDPGYVNVQPQPQEELKEEQTAMVPPAIPLRRCRYCLVLQPLRARHCRECRRCVRRYDHHCPWMENCVGERNHPLFVVYLALQLVVLLWGLYLAWSGLRFFQPWGQWLRSSGLLFATFLLLSLFSLVASLLLVSHLYLVASNTTTWEFISSHRIAYLRQRPSNPFDRGLTRNLAHFFCGWPSGSWETLWAEEEEEGSSPAV</sequence>
<organism>
    <name type="scientific">Homo sapiens</name>
    <name type="common">Human</name>
    <dbReference type="NCBI Taxonomy" id="9606"/>
    <lineage>
        <taxon>Eukaryota</taxon>
        <taxon>Metazoa</taxon>
        <taxon>Chordata</taxon>
        <taxon>Craniata</taxon>
        <taxon>Vertebrata</taxon>
        <taxon>Euteleostomi</taxon>
        <taxon>Mammalia</taxon>
        <taxon>Eutheria</taxon>
        <taxon>Euarchontoglires</taxon>
        <taxon>Primates</taxon>
        <taxon>Haplorrhini</taxon>
        <taxon>Catarrhini</taxon>
        <taxon>Hominidae</taxon>
        <taxon>Homo</taxon>
    </lineage>
</organism>
<keyword id="KW-0012">Acyltransferase</keyword>
<keyword id="KW-0025">Alternative splicing</keyword>
<keyword id="KW-0256">Endoplasmic reticulum</keyword>
<keyword id="KW-0333">Golgi apparatus</keyword>
<keyword id="KW-0449">Lipoprotein</keyword>
<keyword id="KW-0472">Membrane</keyword>
<keyword id="KW-0564">Palmitate</keyword>
<keyword id="KW-1267">Proteomics identification</keyword>
<keyword id="KW-1185">Reference proteome</keyword>
<keyword id="KW-0808">Transferase</keyword>
<keyword id="KW-0812">Transmembrane</keyword>
<keyword id="KW-1133">Transmembrane helix</keyword>
<evidence type="ECO:0000250" key="1">
    <source>
        <dbReference type="UniProtKB" id="Q8IUH5"/>
    </source>
</evidence>
<evidence type="ECO:0000250" key="2">
    <source>
        <dbReference type="UniProtKB" id="Q8VC90"/>
    </source>
</evidence>
<evidence type="ECO:0000255" key="3"/>
<evidence type="ECO:0000255" key="4">
    <source>
        <dbReference type="PROSITE-ProRule" id="PRU00067"/>
    </source>
</evidence>
<evidence type="ECO:0000269" key="5">
    <source>
    </source>
</evidence>
<evidence type="ECO:0000269" key="6">
    <source>
    </source>
</evidence>
<evidence type="ECO:0000269" key="7">
    <source>
    </source>
</evidence>
<evidence type="ECO:0000269" key="8">
    <source>
    </source>
</evidence>
<evidence type="ECO:0000269" key="9">
    <source>
    </source>
</evidence>
<evidence type="ECO:0000269" key="10">
    <source>
    </source>
</evidence>
<evidence type="ECO:0000269" key="11">
    <source ref="4"/>
</evidence>
<evidence type="ECO:0000303" key="12">
    <source>
    </source>
</evidence>
<evidence type="ECO:0000303" key="13">
    <source>
    </source>
</evidence>
<evidence type="ECO:0000303" key="14">
    <source>
    </source>
</evidence>
<evidence type="ECO:0000303" key="15">
    <source>
    </source>
</evidence>
<evidence type="ECO:0000303" key="16">
    <source>
    </source>
</evidence>
<evidence type="ECO:0000305" key="17"/>
<evidence type="ECO:0000305" key="18">
    <source>
    </source>
</evidence>
<evidence type="ECO:0000312" key="19">
    <source>
        <dbReference type="EMBL" id="BAC11553.1"/>
    </source>
</evidence>
<evidence type="ECO:0000312" key="20">
    <source>
        <dbReference type="HGNC" id="HGNC:19159"/>
    </source>
</evidence>
<comment type="function">
    <text evidence="2 9 10">Palmitoyltransferase that catalyzes the addition of palmitate onto various protein substrates (PubMed:36586411). Has a palmitoyltransferase activity toward gephyrin/GPHN, regulating its clustering at synapses and its function in gamma-aminobutyric acid receptor clustering (By similarity). Thereby, indirectly regulates GABAergic synaptic transmission (By similarity). Negatively regulates NLRP3-driven inflammation. Catalyzes NLRP3 palmitoylation, leading to its degradation via the chaperone-mediated autophagy (CMA) process (PubMed:36586411, PubMed:39225180).</text>
</comment>
<comment type="catalytic activity">
    <reaction evidence="9">
        <text>L-cysteinyl-[protein] + hexadecanoyl-CoA = S-hexadecanoyl-L-cysteinyl-[protein] + CoA</text>
        <dbReference type="Rhea" id="RHEA:36683"/>
        <dbReference type="Rhea" id="RHEA-COMP:10131"/>
        <dbReference type="Rhea" id="RHEA-COMP:11032"/>
        <dbReference type="ChEBI" id="CHEBI:29950"/>
        <dbReference type="ChEBI" id="CHEBI:57287"/>
        <dbReference type="ChEBI" id="CHEBI:57379"/>
        <dbReference type="ChEBI" id="CHEBI:74151"/>
        <dbReference type="EC" id="2.3.1.225"/>
    </reaction>
    <physiologicalReaction direction="left-to-right" evidence="9">
        <dbReference type="Rhea" id="RHEA:36684"/>
    </physiologicalReaction>
</comment>
<comment type="subcellular location">
    <subcellularLocation>
        <location evidence="2">Golgi apparatus membrane</location>
        <topology evidence="3">Multi-pass membrane protein</topology>
    </subcellularLocation>
    <subcellularLocation>
        <location evidence="8">Endoplasmic reticulum membrane</location>
        <topology evidence="3">Multi-pass membrane protein</topology>
    </subcellularLocation>
</comment>
<comment type="alternative products">
    <event type="alternative splicing"/>
    <isoform>
        <id>Q96GR4-1</id>
        <name>1</name>
        <sequence type="displayed"/>
    </isoform>
    <isoform>
        <id>Q96GR4-2</id>
        <name>2</name>
        <sequence type="described" ref="VSP_006945"/>
    </isoform>
    <isoform>
        <id>Q96GR4-3</id>
        <name>3</name>
        <sequence type="described" ref="VSP_016271"/>
    </isoform>
</comment>
<comment type="tissue specificity">
    <text evidence="8">Widely expressed.</text>
</comment>
<comment type="domain">
    <text evidence="1">The DHHC domain is required for palmitoyltransferase activity.</text>
</comment>
<comment type="similarity">
    <text evidence="17">Belongs to the DHHC palmitoyltransferase family.</text>
</comment>
<accession>Q96GR4</accession>
<accession>A6NH95</accession>
<accession>B2RE03</accession>
<accession>Q5T265</accession>
<accession>Q5T267</accession>
<accession>Q5T268</accession>
<accession>Q86VT5</accession>
<accession>Q96T09</accession>